<sequence length="74" mass="8580">MAKKESYEDMLGKLQDILSTLEDDNLNLEEGMKSYEDGVKLVNKLYKTLNSYEGKISVIKEEKEVEFENQDGDR</sequence>
<feature type="chain" id="PRO_1000119914" description="Exodeoxyribonuclease 7 small subunit">
    <location>
        <begin position="1"/>
        <end position="74"/>
    </location>
</feature>
<protein>
    <recommendedName>
        <fullName evidence="1">Exodeoxyribonuclease 7 small subunit</fullName>
        <ecNumber evidence="1">3.1.11.6</ecNumber>
    </recommendedName>
    <alternativeName>
        <fullName evidence="1">Exodeoxyribonuclease VII small subunit</fullName>
        <shortName evidence="1">Exonuclease VII small subunit</shortName>
    </alternativeName>
</protein>
<proteinExistence type="inferred from homology"/>
<dbReference type="EC" id="3.1.11.6" evidence="1"/>
<dbReference type="EMBL" id="CP001056">
    <property type="protein sequence ID" value="ACD22670.1"/>
    <property type="molecule type" value="Genomic_DNA"/>
</dbReference>
<dbReference type="SMR" id="B2TRM7"/>
<dbReference type="KEGG" id="cbk:CLL_A2403"/>
<dbReference type="PATRIC" id="fig|935198.13.peg.2361"/>
<dbReference type="HOGENOM" id="CLU_145918_3_2_9"/>
<dbReference type="Proteomes" id="UP000001195">
    <property type="component" value="Chromosome"/>
</dbReference>
<dbReference type="GO" id="GO:0005829">
    <property type="term" value="C:cytosol"/>
    <property type="evidence" value="ECO:0007669"/>
    <property type="project" value="TreeGrafter"/>
</dbReference>
<dbReference type="GO" id="GO:0009318">
    <property type="term" value="C:exodeoxyribonuclease VII complex"/>
    <property type="evidence" value="ECO:0007669"/>
    <property type="project" value="InterPro"/>
</dbReference>
<dbReference type="GO" id="GO:0008855">
    <property type="term" value="F:exodeoxyribonuclease VII activity"/>
    <property type="evidence" value="ECO:0007669"/>
    <property type="project" value="UniProtKB-UniRule"/>
</dbReference>
<dbReference type="GO" id="GO:0006308">
    <property type="term" value="P:DNA catabolic process"/>
    <property type="evidence" value="ECO:0007669"/>
    <property type="project" value="UniProtKB-UniRule"/>
</dbReference>
<dbReference type="Gene3D" id="1.10.287.1040">
    <property type="entry name" value="Exonuclease VII, small subunit"/>
    <property type="match status" value="1"/>
</dbReference>
<dbReference type="HAMAP" id="MF_00337">
    <property type="entry name" value="Exonuc_7_S"/>
    <property type="match status" value="1"/>
</dbReference>
<dbReference type="InterPro" id="IPR003761">
    <property type="entry name" value="Exonuc_VII_S"/>
</dbReference>
<dbReference type="InterPro" id="IPR037004">
    <property type="entry name" value="Exonuc_VII_ssu_sf"/>
</dbReference>
<dbReference type="NCBIfam" id="TIGR01280">
    <property type="entry name" value="xseB"/>
    <property type="match status" value="1"/>
</dbReference>
<dbReference type="PANTHER" id="PTHR34137">
    <property type="entry name" value="EXODEOXYRIBONUCLEASE 7 SMALL SUBUNIT"/>
    <property type="match status" value="1"/>
</dbReference>
<dbReference type="PANTHER" id="PTHR34137:SF1">
    <property type="entry name" value="EXODEOXYRIBONUCLEASE 7 SMALL SUBUNIT"/>
    <property type="match status" value="1"/>
</dbReference>
<dbReference type="Pfam" id="PF02609">
    <property type="entry name" value="Exonuc_VII_S"/>
    <property type="match status" value="1"/>
</dbReference>
<dbReference type="PIRSF" id="PIRSF006488">
    <property type="entry name" value="Exonuc_VII_S"/>
    <property type="match status" value="1"/>
</dbReference>
<dbReference type="SUPFAM" id="SSF116842">
    <property type="entry name" value="XseB-like"/>
    <property type="match status" value="1"/>
</dbReference>
<comment type="function">
    <text evidence="1">Bidirectionally degrades single-stranded DNA into large acid-insoluble oligonucleotides, which are then degraded further into small acid-soluble oligonucleotides.</text>
</comment>
<comment type="catalytic activity">
    <reaction evidence="1">
        <text>Exonucleolytic cleavage in either 5'- to 3'- or 3'- to 5'-direction to yield nucleoside 5'-phosphates.</text>
        <dbReference type="EC" id="3.1.11.6"/>
    </reaction>
</comment>
<comment type="subunit">
    <text evidence="1">Heterooligomer composed of large and small subunits.</text>
</comment>
<comment type="subcellular location">
    <subcellularLocation>
        <location evidence="1">Cytoplasm</location>
    </subcellularLocation>
</comment>
<comment type="similarity">
    <text evidence="1">Belongs to the XseB family.</text>
</comment>
<organism>
    <name type="scientific">Clostridium botulinum (strain Eklund 17B / Type B)</name>
    <dbReference type="NCBI Taxonomy" id="935198"/>
    <lineage>
        <taxon>Bacteria</taxon>
        <taxon>Bacillati</taxon>
        <taxon>Bacillota</taxon>
        <taxon>Clostridia</taxon>
        <taxon>Eubacteriales</taxon>
        <taxon>Clostridiaceae</taxon>
        <taxon>Clostridium</taxon>
    </lineage>
</organism>
<reference key="1">
    <citation type="submission" date="2008-04" db="EMBL/GenBank/DDBJ databases">
        <title>Complete sequence of Clostridium botulinum strain Eklund.</title>
        <authorList>
            <person name="Brinkac L.M."/>
            <person name="Brown J.L."/>
            <person name="Bruce D."/>
            <person name="Detter C."/>
            <person name="Munk C."/>
            <person name="Smith L.A."/>
            <person name="Smith T.J."/>
            <person name="Sutton G."/>
            <person name="Brettin T.S."/>
        </authorList>
    </citation>
    <scope>NUCLEOTIDE SEQUENCE [LARGE SCALE GENOMIC DNA]</scope>
    <source>
        <strain>Eklund 17B / Type B</strain>
    </source>
</reference>
<evidence type="ECO:0000255" key="1">
    <source>
        <dbReference type="HAMAP-Rule" id="MF_00337"/>
    </source>
</evidence>
<gene>
    <name evidence="1" type="primary">xseB</name>
    <name type="ordered locus">CLL_A2403</name>
</gene>
<keyword id="KW-0963">Cytoplasm</keyword>
<keyword id="KW-0269">Exonuclease</keyword>
<keyword id="KW-0378">Hydrolase</keyword>
<keyword id="KW-0540">Nuclease</keyword>
<accession>B2TRM7</accession>
<name>EX7S_CLOBB</name>